<organism>
    <name type="scientific">Listeria welshimeri serovar 6b (strain ATCC 35897 / DSM 20650 / CCUG 15529 / CIP 8149 / NCTC 11857 / SLCC 5334 / V8)</name>
    <dbReference type="NCBI Taxonomy" id="386043"/>
    <lineage>
        <taxon>Bacteria</taxon>
        <taxon>Bacillati</taxon>
        <taxon>Bacillota</taxon>
        <taxon>Bacilli</taxon>
        <taxon>Bacillales</taxon>
        <taxon>Listeriaceae</taxon>
        <taxon>Listeria</taxon>
    </lineage>
</organism>
<name>MUTL_LISW6</name>
<feature type="chain" id="PRO_1000010039" description="DNA mismatch repair protein MutL">
    <location>
        <begin position="1"/>
        <end position="603"/>
    </location>
</feature>
<feature type="region of interest" description="Disordered" evidence="2">
    <location>
        <begin position="336"/>
        <end position="355"/>
    </location>
</feature>
<feature type="region of interest" description="Disordered" evidence="2">
    <location>
        <begin position="361"/>
        <end position="384"/>
    </location>
</feature>
<feature type="compositionally biased region" description="Basic and acidic residues" evidence="2">
    <location>
        <begin position="336"/>
        <end position="346"/>
    </location>
</feature>
<dbReference type="EMBL" id="AM263198">
    <property type="protein sequence ID" value="CAK20838.1"/>
    <property type="molecule type" value="Genomic_DNA"/>
</dbReference>
<dbReference type="RefSeq" id="WP_011702216.1">
    <property type="nucleotide sequence ID" value="NC_008555.1"/>
</dbReference>
<dbReference type="SMR" id="A0AIK6"/>
<dbReference type="STRING" id="386043.lwe1420"/>
<dbReference type="GeneID" id="61189296"/>
<dbReference type="KEGG" id="lwe:lwe1420"/>
<dbReference type="eggNOG" id="COG0323">
    <property type="taxonomic scope" value="Bacteria"/>
</dbReference>
<dbReference type="HOGENOM" id="CLU_004131_4_1_9"/>
<dbReference type="OrthoDB" id="9763467at2"/>
<dbReference type="Proteomes" id="UP000000779">
    <property type="component" value="Chromosome"/>
</dbReference>
<dbReference type="GO" id="GO:0032300">
    <property type="term" value="C:mismatch repair complex"/>
    <property type="evidence" value="ECO:0007669"/>
    <property type="project" value="InterPro"/>
</dbReference>
<dbReference type="GO" id="GO:0005524">
    <property type="term" value="F:ATP binding"/>
    <property type="evidence" value="ECO:0007669"/>
    <property type="project" value="InterPro"/>
</dbReference>
<dbReference type="GO" id="GO:0016887">
    <property type="term" value="F:ATP hydrolysis activity"/>
    <property type="evidence" value="ECO:0007669"/>
    <property type="project" value="InterPro"/>
</dbReference>
<dbReference type="GO" id="GO:0140664">
    <property type="term" value="F:ATP-dependent DNA damage sensor activity"/>
    <property type="evidence" value="ECO:0007669"/>
    <property type="project" value="InterPro"/>
</dbReference>
<dbReference type="GO" id="GO:0030983">
    <property type="term" value="F:mismatched DNA binding"/>
    <property type="evidence" value="ECO:0007669"/>
    <property type="project" value="InterPro"/>
</dbReference>
<dbReference type="GO" id="GO:0006298">
    <property type="term" value="P:mismatch repair"/>
    <property type="evidence" value="ECO:0007669"/>
    <property type="project" value="UniProtKB-UniRule"/>
</dbReference>
<dbReference type="CDD" id="cd16926">
    <property type="entry name" value="HATPase_MutL-MLH-PMS-like"/>
    <property type="match status" value="1"/>
</dbReference>
<dbReference type="CDD" id="cd00782">
    <property type="entry name" value="MutL_Trans"/>
    <property type="match status" value="1"/>
</dbReference>
<dbReference type="FunFam" id="3.30.1370.100:FF:000004">
    <property type="entry name" value="DNA mismatch repair endonuclease MutL"/>
    <property type="match status" value="1"/>
</dbReference>
<dbReference type="FunFam" id="3.30.230.10:FF:000036">
    <property type="entry name" value="DNA mismatch repair endonuclease MutL"/>
    <property type="match status" value="1"/>
</dbReference>
<dbReference type="FunFam" id="3.30.565.10:FF:000003">
    <property type="entry name" value="DNA mismatch repair endonuclease MutL"/>
    <property type="match status" value="1"/>
</dbReference>
<dbReference type="Gene3D" id="3.30.230.10">
    <property type="match status" value="1"/>
</dbReference>
<dbReference type="Gene3D" id="3.30.565.10">
    <property type="entry name" value="Histidine kinase-like ATPase, C-terminal domain"/>
    <property type="match status" value="1"/>
</dbReference>
<dbReference type="Gene3D" id="3.30.1540.20">
    <property type="entry name" value="MutL, C-terminal domain, dimerisation subdomain"/>
    <property type="match status" value="1"/>
</dbReference>
<dbReference type="Gene3D" id="3.30.1370.100">
    <property type="entry name" value="MutL, C-terminal domain, regulatory subdomain"/>
    <property type="match status" value="1"/>
</dbReference>
<dbReference type="HAMAP" id="MF_00149">
    <property type="entry name" value="DNA_mis_repair"/>
    <property type="match status" value="1"/>
</dbReference>
<dbReference type="InterPro" id="IPR014762">
    <property type="entry name" value="DNA_mismatch_repair_CS"/>
</dbReference>
<dbReference type="InterPro" id="IPR020667">
    <property type="entry name" value="DNA_mismatch_repair_MutL"/>
</dbReference>
<dbReference type="InterPro" id="IPR013507">
    <property type="entry name" value="DNA_mismatch_S5_2-like"/>
</dbReference>
<dbReference type="InterPro" id="IPR036890">
    <property type="entry name" value="HATPase_C_sf"/>
</dbReference>
<dbReference type="InterPro" id="IPR002099">
    <property type="entry name" value="MutL/Mlh/PMS"/>
</dbReference>
<dbReference type="InterPro" id="IPR038973">
    <property type="entry name" value="MutL/Mlh/Pms-like"/>
</dbReference>
<dbReference type="InterPro" id="IPR014790">
    <property type="entry name" value="MutL_C"/>
</dbReference>
<dbReference type="InterPro" id="IPR042120">
    <property type="entry name" value="MutL_C_dimsub"/>
</dbReference>
<dbReference type="InterPro" id="IPR042121">
    <property type="entry name" value="MutL_C_regsub"/>
</dbReference>
<dbReference type="InterPro" id="IPR037198">
    <property type="entry name" value="MutL_C_sf"/>
</dbReference>
<dbReference type="InterPro" id="IPR020568">
    <property type="entry name" value="Ribosomal_Su5_D2-typ_SF"/>
</dbReference>
<dbReference type="InterPro" id="IPR014721">
    <property type="entry name" value="Ribsml_uS5_D2-typ_fold_subgr"/>
</dbReference>
<dbReference type="NCBIfam" id="TIGR00585">
    <property type="entry name" value="mutl"/>
    <property type="match status" value="1"/>
</dbReference>
<dbReference type="PANTHER" id="PTHR10073">
    <property type="entry name" value="DNA MISMATCH REPAIR PROTEIN MLH, PMS, MUTL"/>
    <property type="match status" value="1"/>
</dbReference>
<dbReference type="PANTHER" id="PTHR10073:SF12">
    <property type="entry name" value="DNA MISMATCH REPAIR PROTEIN MLH1"/>
    <property type="match status" value="1"/>
</dbReference>
<dbReference type="Pfam" id="PF01119">
    <property type="entry name" value="DNA_mis_repair"/>
    <property type="match status" value="1"/>
</dbReference>
<dbReference type="Pfam" id="PF13589">
    <property type="entry name" value="HATPase_c_3"/>
    <property type="match status" value="1"/>
</dbReference>
<dbReference type="Pfam" id="PF08676">
    <property type="entry name" value="MutL_C"/>
    <property type="match status" value="1"/>
</dbReference>
<dbReference type="SMART" id="SM01340">
    <property type="entry name" value="DNA_mis_repair"/>
    <property type="match status" value="1"/>
</dbReference>
<dbReference type="SMART" id="SM00853">
    <property type="entry name" value="MutL_C"/>
    <property type="match status" value="1"/>
</dbReference>
<dbReference type="SUPFAM" id="SSF55874">
    <property type="entry name" value="ATPase domain of HSP90 chaperone/DNA topoisomerase II/histidine kinase"/>
    <property type="match status" value="1"/>
</dbReference>
<dbReference type="SUPFAM" id="SSF118116">
    <property type="entry name" value="DNA mismatch repair protein MutL"/>
    <property type="match status" value="1"/>
</dbReference>
<dbReference type="SUPFAM" id="SSF54211">
    <property type="entry name" value="Ribosomal protein S5 domain 2-like"/>
    <property type="match status" value="1"/>
</dbReference>
<dbReference type="PROSITE" id="PS00058">
    <property type="entry name" value="DNA_MISMATCH_REPAIR_1"/>
    <property type="match status" value="1"/>
</dbReference>
<protein>
    <recommendedName>
        <fullName evidence="1">DNA mismatch repair protein MutL</fullName>
    </recommendedName>
</protein>
<keyword id="KW-0227">DNA damage</keyword>
<keyword id="KW-0234">DNA repair</keyword>
<comment type="function">
    <text evidence="1">This protein is involved in the repair of mismatches in DNA. It is required for dam-dependent methyl-directed DNA mismatch repair. May act as a 'molecular matchmaker', a protein that promotes the formation of a stable complex between two or more DNA-binding proteins in an ATP-dependent manner without itself being part of a final effector complex.</text>
</comment>
<comment type="similarity">
    <text evidence="1">Belongs to the DNA mismatch repair MutL/HexB family.</text>
</comment>
<reference key="1">
    <citation type="journal article" date="2006" name="J. Bacteriol.">
        <title>Whole-genome sequence of Listeria welshimeri reveals common steps in genome reduction with Listeria innocua as compared to Listeria monocytogenes.</title>
        <authorList>
            <person name="Hain T."/>
            <person name="Steinweg C."/>
            <person name="Kuenne C.T."/>
            <person name="Billion A."/>
            <person name="Ghai R."/>
            <person name="Chatterjee S.S."/>
            <person name="Domann E."/>
            <person name="Kaerst U."/>
            <person name="Goesmann A."/>
            <person name="Bekel T."/>
            <person name="Bartels D."/>
            <person name="Kaiser O."/>
            <person name="Meyer F."/>
            <person name="Puehler A."/>
            <person name="Weisshaar B."/>
            <person name="Wehland J."/>
            <person name="Liang C."/>
            <person name="Dandekar T."/>
            <person name="Lampidis R."/>
            <person name="Kreft J."/>
            <person name="Goebel W."/>
            <person name="Chakraborty T."/>
        </authorList>
    </citation>
    <scope>NUCLEOTIDE SEQUENCE [LARGE SCALE GENOMIC DNA]</scope>
    <source>
        <strain>ATCC 35897 / DSM 20650 / CCUG 15529 / CIP 8149 / NCTC 11857 / SLCC 5334 / V8</strain>
    </source>
</reference>
<sequence length="603" mass="68155">MAKHIVELTDALSNKIAAGEVVERPASVVKELVENAIDAGSTVIDILVEEAGLNKITIIDNGSGIEEEDVATAFLRHATSKIKNEADLFRVHTLGFRGEALPSIASVSHLSMETSTGETKGTTISLEGGKIMEQKSGHARKGTQIEVSQLFFNTPARLKYLKSLPTELGNITDILNRLALAHPDISFRFSHNGKPLLQTNGNGDLRQVIAAIYGVSIARKSIPVKAESLDFNISGYAVLPEVNRSNRNYISTIINGRFIKNFALVKAIQEGYHTLLPIGRFPIIVLQIEMDPIIVDVNVHPAKLEVRLSKEKELGQLISQMIKEAFHQLQLIPDGEVSKKQKEQQKSEQIQMSFEENKLPKETPTLFSKPNVPEYVPSDEDTSREDDFILETLPTYDSKIQPEQAEEPKERIPKMYPIGQMHATYIFAQNENGLYIIDQHAAQERIKYEFYREKIGEVSRELQELLVPIVLEFPTDEYVRLEEQKTKLEEVGVFLENFGQNSFIIRAHPTWFPKNQEEEMLREIIDEALSAPSISIHKLREDTAIMMSCKKSIKANHYLTMQDMEALLDTLREASDPFTCPHGRPVIIQYSTYELEKMFKRVM</sequence>
<gene>
    <name evidence="1" type="primary">mutL</name>
    <name type="ordered locus">lwe1420</name>
</gene>
<proteinExistence type="inferred from homology"/>
<accession>A0AIK6</accession>
<evidence type="ECO:0000255" key="1">
    <source>
        <dbReference type="HAMAP-Rule" id="MF_00149"/>
    </source>
</evidence>
<evidence type="ECO:0000256" key="2">
    <source>
        <dbReference type="SAM" id="MobiDB-lite"/>
    </source>
</evidence>